<protein>
    <recommendedName>
        <fullName>Uncharacterized protein ORF41</fullName>
    </recommendedName>
</protein>
<name>Y041_OSHVF</name>
<organismHost>
    <name type="scientific">Magallana gigas</name>
    <name type="common">Pacific oyster</name>
    <name type="synonym">Crassostrea gigas</name>
    <dbReference type="NCBI Taxonomy" id="29159"/>
</organismHost>
<organismHost>
    <name type="scientific">Pecten maximus</name>
    <name type="common">King scallop</name>
    <name type="synonym">Pilgrim's clam</name>
    <dbReference type="NCBI Taxonomy" id="6579"/>
</organismHost>
<reference key="1">
    <citation type="journal article" date="2005" name="J. Gen. Virol.">
        <title>A novel class of herpesvirus with bivalve hosts.</title>
        <authorList>
            <person name="Davison A.J."/>
            <person name="Trus B.L."/>
            <person name="Cheng N."/>
            <person name="Steven A.C."/>
            <person name="Watson M.S."/>
            <person name="Cunningham C."/>
            <person name="Le Deuff R.M."/>
            <person name="Renault T."/>
        </authorList>
    </citation>
    <scope>NUCLEOTIDE SEQUENCE [LARGE SCALE GENOMIC DNA]</scope>
</reference>
<dbReference type="EMBL" id="AY509253">
    <property type="protein sequence ID" value="AAS00932.1"/>
    <property type="molecule type" value="Genomic_DNA"/>
</dbReference>
<dbReference type="RefSeq" id="YP_024585.1">
    <property type="nucleotide sequence ID" value="NC_005881.2"/>
</dbReference>
<dbReference type="SMR" id="Q6R7I3"/>
<dbReference type="KEGG" id="vg:2948198"/>
<dbReference type="Proteomes" id="UP000007021">
    <property type="component" value="Segment"/>
</dbReference>
<dbReference type="GO" id="GO:0033644">
    <property type="term" value="C:host cell membrane"/>
    <property type="evidence" value="ECO:0007669"/>
    <property type="project" value="UniProtKB-SubCell"/>
</dbReference>
<dbReference type="GO" id="GO:0016020">
    <property type="term" value="C:membrane"/>
    <property type="evidence" value="ECO:0007669"/>
    <property type="project" value="UniProtKB-KW"/>
</dbReference>
<accession>Q6R7I3</accession>
<evidence type="ECO:0000255" key="1"/>
<evidence type="ECO:0000256" key="2">
    <source>
        <dbReference type="SAM" id="MobiDB-lite"/>
    </source>
</evidence>
<evidence type="ECO:0000305" key="3"/>
<organism>
    <name type="scientific">Ostreid herpesvirus 1 (isolate France)</name>
    <name type="common">OsHV-1</name>
    <name type="synonym">Pacific oyster herpesvirus</name>
    <dbReference type="NCBI Taxonomy" id="654903"/>
    <lineage>
        <taxon>Viruses</taxon>
        <taxon>Duplodnaviria</taxon>
        <taxon>Heunggongvirae</taxon>
        <taxon>Peploviricota</taxon>
        <taxon>Herviviricetes</taxon>
        <taxon>Herpesvirales</taxon>
        <taxon>Malacoherpesviridae</taxon>
        <taxon>Ostreavirus</taxon>
        <taxon>Ostreavirus ostreidmalaco1</taxon>
        <taxon>Ostreid herpesvirus 1</taxon>
    </lineage>
</organism>
<gene>
    <name type="ORF">ORF41</name>
</gene>
<sequence>MTNMILLSAVFLSLAILETHCANHISTGISTAGEVEIRCVSDNYVKKIMAYNRDRLSDATISIIQNYKQGPYGCDGVAQSSVISGAAKEKRINTPECITTGRIGGLIVRLKSKPKEEDLGKWECYFTDLTDNVDSKTLTDVLTKYNLPNSGYFNADGTPNDFTTELKVLDYDDVTKDVIMGCKLSTDLGTPPTMSDKQPYRSVHLTGDDRYYAEGDLYSRTSFSSTPYDCTGIPQNTNKYLYNCFNVAPNEYRSAAHRPPPFIALTAPSTPSNIILDNVAEKHAFTKHFFFPAEDKAVVDLRGKNVVISPLAVSDYTQIKMKYLSVQNAVFSPPEELINKLGEVLLKELSTATKFEIVNVDNNFAPTIPGDPYKMVMIADQSCVSGVNKNVIYTGLCKKSSSMSVITMTYFSSLDCDKTSHYAYIFYTGNEPREVEILPAGIQEAVGTPPDVTASNIPENSGGNDCESTTAQDVAEKLFGHLQTVCPTIPLCQMPSTVRTVITDGECAQRPFICNNRALVEYHVPLTELTSGSPFANDWSCTAVDKQSPMKTWHKGLRTELACGLGDLKQKYIDNSLPLIVKQGEDSYKVVCSTPPSLCTDNGLTPPRLNKDDKTYTKEELMAPDDYACTDHFDRVEVKKSYELIQDHFGCEYKLYCKITPHNVRCYITNFPQCQTPAYISGTIGSDTIPNTALTPESLSVMFIKGGLVSTTSLDLSIWTIKGIKLAQFTTAADLPDACELAANNIQVTHNMDFTSAGKTVTFTCINKLPLDNTCDISAGHSKDTRYKLEISNDGSNWVALAESTLAIDGSGVKTLTSTFSKEGGIFAEGDGVFSFLFYSLNDDAIRTMYTDRSNIQARCVKMFDSSSSTSTIKAVDYISYDTYRKSLVPKEPTVTTTTESPPPPTTTTRQIHSKEDFDRVKKELGEKLYHVLFFMGVLTVSVAGGVIILSFIGCLIMRKMEDAPQKTKYSV</sequence>
<proteinExistence type="inferred from homology"/>
<feature type="signal peptide" evidence="1">
    <location>
        <begin position="1"/>
        <end position="21"/>
    </location>
</feature>
<feature type="chain" id="PRO_0000385070" description="Uncharacterized protein ORF41">
    <location>
        <begin position="22"/>
        <end position="972"/>
    </location>
</feature>
<feature type="topological domain" description="Extracellular" evidence="1">
    <location>
        <begin position="22"/>
        <end position="932"/>
    </location>
</feature>
<feature type="transmembrane region" description="Helical" evidence="1">
    <location>
        <begin position="933"/>
        <end position="953"/>
    </location>
</feature>
<feature type="topological domain" description="Cytoplasmic" evidence="1">
    <location>
        <begin position="954"/>
        <end position="972"/>
    </location>
</feature>
<feature type="region of interest" description="Disordered" evidence="2">
    <location>
        <begin position="892"/>
        <end position="912"/>
    </location>
</feature>
<keyword id="KW-1043">Host membrane</keyword>
<keyword id="KW-0472">Membrane</keyword>
<keyword id="KW-1185">Reference proteome</keyword>
<keyword id="KW-0732">Signal</keyword>
<keyword id="KW-0812">Transmembrane</keyword>
<keyword id="KW-1133">Transmembrane helix</keyword>
<comment type="subcellular location">
    <subcellularLocation>
        <location evidence="3">Host membrane</location>
        <topology evidence="3">Single-pass type I membrane protein</topology>
    </subcellularLocation>
</comment>